<proteinExistence type="inferred from homology"/>
<protein>
    <recommendedName>
        <fullName evidence="1">Ribosome maturation factor RimP</fullName>
    </recommendedName>
</protein>
<keyword id="KW-0963">Cytoplasm</keyword>
<keyword id="KW-0690">Ribosome biogenesis</keyword>
<feature type="chain" id="PRO_1000064704" description="Ribosome maturation factor RimP">
    <location>
        <begin position="1"/>
        <end position="153"/>
    </location>
</feature>
<organism>
    <name type="scientific">Clostridium botulinum (strain Langeland / NCTC 10281 / Type F)</name>
    <dbReference type="NCBI Taxonomy" id="441772"/>
    <lineage>
        <taxon>Bacteria</taxon>
        <taxon>Bacillati</taxon>
        <taxon>Bacillota</taxon>
        <taxon>Clostridia</taxon>
        <taxon>Eubacteriales</taxon>
        <taxon>Clostridiaceae</taxon>
        <taxon>Clostridium</taxon>
    </lineage>
</organism>
<sequence>MSKHSLIENLKEQIEPIAEGLDYELYHIEFVKEGKENYLRIYIDSENGVSLEGCEKVSRAVSELLDDIDPIQESYYLEVSSPGIDRVLYTDKHLEKYKGYNIVLNLYSAIDKKKKYEGELVDFNENEIDIKVEENIVTIPREKISKTTLKGEL</sequence>
<comment type="function">
    <text evidence="1">Required for maturation of 30S ribosomal subunits.</text>
</comment>
<comment type="subcellular location">
    <subcellularLocation>
        <location evidence="1">Cytoplasm</location>
    </subcellularLocation>
</comment>
<comment type="similarity">
    <text evidence="1">Belongs to the RimP family.</text>
</comment>
<reference key="1">
    <citation type="submission" date="2007-06" db="EMBL/GenBank/DDBJ databases">
        <authorList>
            <person name="Brinkac L.M."/>
            <person name="Daugherty S."/>
            <person name="Dodson R.J."/>
            <person name="Madupu R."/>
            <person name="Brown J.L."/>
            <person name="Bruce D."/>
            <person name="Detter C."/>
            <person name="Munk C."/>
            <person name="Smith L.A."/>
            <person name="Smith T.J."/>
            <person name="White O."/>
            <person name="Brettin T.S."/>
        </authorList>
    </citation>
    <scope>NUCLEOTIDE SEQUENCE [LARGE SCALE GENOMIC DNA]</scope>
    <source>
        <strain>Langeland / NCTC 10281 / Type F</strain>
    </source>
</reference>
<gene>
    <name evidence="1" type="primary">rimP</name>
    <name type="ordered locus">CLI_2478</name>
</gene>
<name>RIMP_CLOBL</name>
<dbReference type="EMBL" id="CP000728">
    <property type="protein sequence ID" value="ABS40916.1"/>
    <property type="molecule type" value="Genomic_DNA"/>
</dbReference>
<dbReference type="RefSeq" id="WP_012100376.1">
    <property type="nucleotide sequence ID" value="NC_009699.1"/>
</dbReference>
<dbReference type="SMR" id="A7GG10"/>
<dbReference type="KEGG" id="cbf:CLI_2478"/>
<dbReference type="HOGENOM" id="CLU_070525_2_0_9"/>
<dbReference type="Proteomes" id="UP000002410">
    <property type="component" value="Chromosome"/>
</dbReference>
<dbReference type="GO" id="GO:0005829">
    <property type="term" value="C:cytosol"/>
    <property type="evidence" value="ECO:0007669"/>
    <property type="project" value="TreeGrafter"/>
</dbReference>
<dbReference type="GO" id="GO:0000028">
    <property type="term" value="P:ribosomal small subunit assembly"/>
    <property type="evidence" value="ECO:0007669"/>
    <property type="project" value="TreeGrafter"/>
</dbReference>
<dbReference type="GO" id="GO:0006412">
    <property type="term" value="P:translation"/>
    <property type="evidence" value="ECO:0007669"/>
    <property type="project" value="TreeGrafter"/>
</dbReference>
<dbReference type="CDD" id="cd01734">
    <property type="entry name" value="YlxS_C"/>
    <property type="match status" value="1"/>
</dbReference>
<dbReference type="FunFam" id="2.30.30.180:FF:000007">
    <property type="entry name" value="Ribosome maturation factor RimP"/>
    <property type="match status" value="1"/>
</dbReference>
<dbReference type="FunFam" id="3.30.300.70:FF:000001">
    <property type="entry name" value="Ribosome maturation factor RimP"/>
    <property type="match status" value="1"/>
</dbReference>
<dbReference type="Gene3D" id="2.30.30.180">
    <property type="entry name" value="Ribosome maturation factor RimP, C-terminal domain"/>
    <property type="match status" value="1"/>
</dbReference>
<dbReference type="Gene3D" id="3.30.300.70">
    <property type="entry name" value="RimP-like superfamily, N-terminal"/>
    <property type="match status" value="1"/>
</dbReference>
<dbReference type="HAMAP" id="MF_01077">
    <property type="entry name" value="RimP"/>
    <property type="match status" value="1"/>
</dbReference>
<dbReference type="InterPro" id="IPR003728">
    <property type="entry name" value="Ribosome_maturation_RimP"/>
</dbReference>
<dbReference type="InterPro" id="IPR028998">
    <property type="entry name" value="RimP_C"/>
</dbReference>
<dbReference type="InterPro" id="IPR036847">
    <property type="entry name" value="RimP_C_sf"/>
</dbReference>
<dbReference type="InterPro" id="IPR028989">
    <property type="entry name" value="RimP_N"/>
</dbReference>
<dbReference type="InterPro" id="IPR035956">
    <property type="entry name" value="RimP_N_sf"/>
</dbReference>
<dbReference type="NCBIfam" id="NF000934">
    <property type="entry name" value="PRK00092.3-1"/>
    <property type="match status" value="1"/>
</dbReference>
<dbReference type="PANTHER" id="PTHR33867">
    <property type="entry name" value="RIBOSOME MATURATION FACTOR RIMP"/>
    <property type="match status" value="1"/>
</dbReference>
<dbReference type="PANTHER" id="PTHR33867:SF1">
    <property type="entry name" value="RIBOSOME MATURATION FACTOR RIMP"/>
    <property type="match status" value="1"/>
</dbReference>
<dbReference type="Pfam" id="PF17384">
    <property type="entry name" value="DUF150_C"/>
    <property type="match status" value="1"/>
</dbReference>
<dbReference type="Pfam" id="PF02576">
    <property type="entry name" value="RimP_N"/>
    <property type="match status" value="1"/>
</dbReference>
<dbReference type="SUPFAM" id="SSF74942">
    <property type="entry name" value="YhbC-like, C-terminal domain"/>
    <property type="match status" value="1"/>
</dbReference>
<dbReference type="SUPFAM" id="SSF75420">
    <property type="entry name" value="YhbC-like, N-terminal domain"/>
    <property type="match status" value="1"/>
</dbReference>
<accession>A7GG10</accession>
<evidence type="ECO:0000255" key="1">
    <source>
        <dbReference type="HAMAP-Rule" id="MF_01077"/>
    </source>
</evidence>